<protein>
    <recommendedName>
        <fullName evidence="1">Cell division protein ZipA</fullName>
    </recommendedName>
</protein>
<proteinExistence type="inferred from homology"/>
<accession>A9L5Z2</accession>
<feature type="chain" id="PRO_1000081581" description="Cell division protein ZipA">
    <location>
        <begin position="1"/>
        <end position="356"/>
    </location>
</feature>
<feature type="topological domain" description="Periplasmic" evidence="1">
    <location>
        <begin position="1"/>
        <end position="6"/>
    </location>
</feature>
<feature type="transmembrane region" description="Helical" evidence="1">
    <location>
        <begin position="7"/>
        <end position="27"/>
    </location>
</feature>
<feature type="topological domain" description="Cytoplasmic" evidence="1">
    <location>
        <begin position="28"/>
        <end position="356"/>
    </location>
</feature>
<feature type="region of interest" description="Disordered" evidence="2">
    <location>
        <begin position="132"/>
        <end position="155"/>
    </location>
</feature>
<organism>
    <name type="scientific">Shewanella baltica (strain OS195)</name>
    <dbReference type="NCBI Taxonomy" id="399599"/>
    <lineage>
        <taxon>Bacteria</taxon>
        <taxon>Pseudomonadati</taxon>
        <taxon>Pseudomonadota</taxon>
        <taxon>Gammaproteobacteria</taxon>
        <taxon>Alteromonadales</taxon>
        <taxon>Shewanellaceae</taxon>
        <taxon>Shewanella</taxon>
    </lineage>
</organism>
<comment type="function">
    <text evidence="1">Essential cell division protein that stabilizes the FtsZ protofilaments by cross-linking them and that serves as a cytoplasmic membrane anchor for the Z ring. Also required for the recruitment to the septal ring of downstream cell division proteins.</text>
</comment>
<comment type="subunit">
    <text evidence="1">Interacts with FtsZ via their C-terminal domains.</text>
</comment>
<comment type="subcellular location">
    <subcellularLocation>
        <location evidence="1">Cell inner membrane</location>
        <topology evidence="1">Single-pass type I membrane protein</topology>
    </subcellularLocation>
    <text evidence="1">Localizes to the Z ring in an FtsZ-dependent manner.</text>
</comment>
<comment type="similarity">
    <text evidence="1">Belongs to the ZipA family.</text>
</comment>
<name>ZIPA_SHEB9</name>
<gene>
    <name evidence="1" type="primary">zipA</name>
    <name type="ordered locus">Sbal195_2759</name>
</gene>
<keyword id="KW-0131">Cell cycle</keyword>
<keyword id="KW-0132">Cell division</keyword>
<keyword id="KW-0997">Cell inner membrane</keyword>
<keyword id="KW-1003">Cell membrane</keyword>
<keyword id="KW-0472">Membrane</keyword>
<keyword id="KW-0812">Transmembrane</keyword>
<keyword id="KW-1133">Transmembrane helix</keyword>
<reference key="1">
    <citation type="submission" date="2007-11" db="EMBL/GenBank/DDBJ databases">
        <title>Complete sequence of chromosome of Shewanella baltica OS195.</title>
        <authorList>
            <consortium name="US DOE Joint Genome Institute"/>
            <person name="Copeland A."/>
            <person name="Lucas S."/>
            <person name="Lapidus A."/>
            <person name="Barry K."/>
            <person name="Glavina del Rio T."/>
            <person name="Dalin E."/>
            <person name="Tice H."/>
            <person name="Pitluck S."/>
            <person name="Chain P."/>
            <person name="Malfatti S."/>
            <person name="Shin M."/>
            <person name="Vergez L."/>
            <person name="Schmutz J."/>
            <person name="Larimer F."/>
            <person name="Land M."/>
            <person name="Hauser L."/>
            <person name="Kyrpides N."/>
            <person name="Kim E."/>
            <person name="Brettar I."/>
            <person name="Rodrigues J."/>
            <person name="Konstantinidis K."/>
            <person name="Klappenbach J."/>
            <person name="Hofle M."/>
            <person name="Tiedje J."/>
            <person name="Richardson P."/>
        </authorList>
    </citation>
    <scope>NUCLEOTIDE SEQUENCE [LARGE SCALE GENOMIC DNA]</scope>
    <source>
        <strain>OS195</strain>
    </source>
</reference>
<evidence type="ECO:0000255" key="1">
    <source>
        <dbReference type="HAMAP-Rule" id="MF_00509"/>
    </source>
</evidence>
<evidence type="ECO:0000256" key="2">
    <source>
        <dbReference type="SAM" id="MobiDB-lite"/>
    </source>
</evidence>
<sequence>MEDLQLVLFVLGAIAIVAVLVHGFWSIRRQQPKSLKDSPMGNFYKKQAEKGESIPKRIDAEGFDADGIGAVRVRKAGELAPNNETPTANPYLKQEVKLETKPQELTSPEFKAELKQGLKPELKVEAKHEPIPAQPDFSLQPPVAKEQHRGPKVSRQEPVLGTQVPQMGQSHAAIVAQKAAEQEQALRAAPQQSALFEENEHQADHQEEAFVEQAAEDELGEPRDVLVLHVVAKDGQQLNGAELLPCFLTLNFKYGDMNIFHRHVDNAGNGKVLFSIANMLKPGVFDPDNMEQFSTQGVVFFMTLPCYGDALMNFSIMLNSARQLAEEIDAVVLDGQRLPWGEFTKQDYLHRIRANA</sequence>
<dbReference type="EMBL" id="CP000891">
    <property type="protein sequence ID" value="ABX49926.1"/>
    <property type="molecule type" value="Genomic_DNA"/>
</dbReference>
<dbReference type="RefSeq" id="WP_006085395.1">
    <property type="nucleotide sequence ID" value="NC_009997.1"/>
</dbReference>
<dbReference type="SMR" id="A9L5Z2"/>
<dbReference type="GeneID" id="11772855"/>
<dbReference type="KEGG" id="sbn:Sbal195_2759"/>
<dbReference type="HOGENOM" id="CLU_030174_1_0_6"/>
<dbReference type="Proteomes" id="UP000000770">
    <property type="component" value="Chromosome"/>
</dbReference>
<dbReference type="GO" id="GO:0032153">
    <property type="term" value="C:cell division site"/>
    <property type="evidence" value="ECO:0007669"/>
    <property type="project" value="UniProtKB-UniRule"/>
</dbReference>
<dbReference type="GO" id="GO:0005886">
    <property type="term" value="C:plasma membrane"/>
    <property type="evidence" value="ECO:0007669"/>
    <property type="project" value="UniProtKB-SubCell"/>
</dbReference>
<dbReference type="GO" id="GO:0000917">
    <property type="term" value="P:division septum assembly"/>
    <property type="evidence" value="ECO:0007669"/>
    <property type="project" value="TreeGrafter"/>
</dbReference>
<dbReference type="GO" id="GO:0043093">
    <property type="term" value="P:FtsZ-dependent cytokinesis"/>
    <property type="evidence" value="ECO:0007669"/>
    <property type="project" value="UniProtKB-UniRule"/>
</dbReference>
<dbReference type="FunFam" id="3.30.1400.10:FF:000001">
    <property type="entry name" value="Cell division protein ZipA"/>
    <property type="match status" value="1"/>
</dbReference>
<dbReference type="Gene3D" id="3.30.1400.10">
    <property type="entry name" value="ZipA, C-terminal FtsZ-binding domain"/>
    <property type="match status" value="1"/>
</dbReference>
<dbReference type="HAMAP" id="MF_00509">
    <property type="entry name" value="ZipA"/>
    <property type="match status" value="1"/>
</dbReference>
<dbReference type="InterPro" id="IPR011919">
    <property type="entry name" value="Cell_div_ZipA"/>
</dbReference>
<dbReference type="InterPro" id="IPR007449">
    <property type="entry name" value="ZipA_FtsZ-bd_C"/>
</dbReference>
<dbReference type="InterPro" id="IPR036765">
    <property type="entry name" value="ZipA_FtsZ-bd_C_sf"/>
</dbReference>
<dbReference type="NCBIfam" id="TIGR02205">
    <property type="entry name" value="septum_zipA"/>
    <property type="match status" value="1"/>
</dbReference>
<dbReference type="PANTHER" id="PTHR38685">
    <property type="entry name" value="CELL DIVISION PROTEIN ZIPA"/>
    <property type="match status" value="1"/>
</dbReference>
<dbReference type="PANTHER" id="PTHR38685:SF1">
    <property type="entry name" value="CELL DIVISION PROTEIN ZIPA"/>
    <property type="match status" value="1"/>
</dbReference>
<dbReference type="Pfam" id="PF04354">
    <property type="entry name" value="ZipA_C"/>
    <property type="match status" value="1"/>
</dbReference>
<dbReference type="SMART" id="SM00771">
    <property type="entry name" value="ZipA_C"/>
    <property type="match status" value="1"/>
</dbReference>
<dbReference type="SUPFAM" id="SSF64383">
    <property type="entry name" value="Cell-division protein ZipA, C-terminal domain"/>
    <property type="match status" value="1"/>
</dbReference>